<organism>
    <name type="scientific">Herminiimonas arsenicoxydans</name>
    <dbReference type="NCBI Taxonomy" id="204773"/>
    <lineage>
        <taxon>Bacteria</taxon>
        <taxon>Pseudomonadati</taxon>
        <taxon>Pseudomonadota</taxon>
        <taxon>Betaproteobacteria</taxon>
        <taxon>Burkholderiales</taxon>
        <taxon>Oxalobacteraceae</taxon>
        <taxon>Herminiimonas</taxon>
    </lineage>
</organism>
<keyword id="KW-0030">Aminoacyl-tRNA synthetase</keyword>
<keyword id="KW-0067">ATP-binding</keyword>
<keyword id="KW-0963">Cytoplasm</keyword>
<keyword id="KW-0436">Ligase</keyword>
<keyword id="KW-0547">Nucleotide-binding</keyword>
<keyword id="KW-0648">Protein biosynthesis</keyword>
<keyword id="KW-1185">Reference proteome</keyword>
<name>SYS_HERAR</name>
<proteinExistence type="inferred from homology"/>
<gene>
    <name evidence="1" type="primary">serS</name>
    <name type="ordered locus">HEAR1022</name>
</gene>
<feature type="chain" id="PRO_1000019699" description="Serine--tRNA ligase">
    <location>
        <begin position="1"/>
        <end position="431"/>
    </location>
</feature>
<feature type="binding site" evidence="1">
    <location>
        <begin position="236"/>
        <end position="238"/>
    </location>
    <ligand>
        <name>L-serine</name>
        <dbReference type="ChEBI" id="CHEBI:33384"/>
    </ligand>
</feature>
<feature type="binding site" evidence="1">
    <location>
        <begin position="267"/>
        <end position="269"/>
    </location>
    <ligand>
        <name>ATP</name>
        <dbReference type="ChEBI" id="CHEBI:30616"/>
    </ligand>
</feature>
<feature type="binding site" evidence="1">
    <location>
        <position position="290"/>
    </location>
    <ligand>
        <name>L-serine</name>
        <dbReference type="ChEBI" id="CHEBI:33384"/>
    </ligand>
</feature>
<feature type="binding site" evidence="1">
    <location>
        <begin position="354"/>
        <end position="357"/>
    </location>
    <ligand>
        <name>ATP</name>
        <dbReference type="ChEBI" id="CHEBI:30616"/>
    </ligand>
</feature>
<feature type="binding site" evidence="1">
    <location>
        <position position="389"/>
    </location>
    <ligand>
        <name>L-serine</name>
        <dbReference type="ChEBI" id="CHEBI:33384"/>
    </ligand>
</feature>
<sequence>MIDIQLLRKDIETVAARLAGRKFQLDVNTFNALEAERKQIQSGTEELQNRRNTLSKQIGALKGKGEDTSAVMAEVAGIGDELKASAARLDVLQAEISKFMLAIPNLPHESVPVGKDEEDNVELRKVGTPRAFDFEVRDHVDIGAALGLDFDVAAKITGSRFSVMKGGIARLHRALAQFMLDTHTEEHGYTECYTPYIVNADSLQGTGQLPKFEADLFAVKKGGQEGEGEALYLIPTAEVPLTNIVRDEILAADALPVRMTAHSPCFRSEAGSYGRDTRGMIRQHQFDKVEMVQVVHPEKSYEALDEMCGHAENILKKLGLPYRVITLCTGDMGFGASKTYDLEVWLPAQNTYREISSVSNCEAFQARRMQARFRNAQGKPELTHTLNGSGLAVGRTLVAVLENYQQADGSVIIPEVLHPYMGGLTRLLPQA</sequence>
<dbReference type="EC" id="6.1.1.11" evidence="1"/>
<dbReference type="EMBL" id="CU207211">
    <property type="protein sequence ID" value="CAL61204.1"/>
    <property type="molecule type" value="Genomic_DNA"/>
</dbReference>
<dbReference type="SMR" id="A4G3W7"/>
<dbReference type="STRING" id="204773.HEAR1022"/>
<dbReference type="KEGG" id="har:HEAR1022"/>
<dbReference type="eggNOG" id="COG0172">
    <property type="taxonomic scope" value="Bacteria"/>
</dbReference>
<dbReference type="HOGENOM" id="CLU_023797_1_1_4"/>
<dbReference type="OrthoDB" id="9804647at2"/>
<dbReference type="UniPathway" id="UPA00906">
    <property type="reaction ID" value="UER00895"/>
</dbReference>
<dbReference type="Proteomes" id="UP000006697">
    <property type="component" value="Chromosome"/>
</dbReference>
<dbReference type="GO" id="GO:0005737">
    <property type="term" value="C:cytoplasm"/>
    <property type="evidence" value="ECO:0007669"/>
    <property type="project" value="UniProtKB-SubCell"/>
</dbReference>
<dbReference type="GO" id="GO:0005524">
    <property type="term" value="F:ATP binding"/>
    <property type="evidence" value="ECO:0007669"/>
    <property type="project" value="UniProtKB-UniRule"/>
</dbReference>
<dbReference type="GO" id="GO:0004828">
    <property type="term" value="F:serine-tRNA ligase activity"/>
    <property type="evidence" value="ECO:0007669"/>
    <property type="project" value="UniProtKB-UniRule"/>
</dbReference>
<dbReference type="GO" id="GO:0016260">
    <property type="term" value="P:selenocysteine biosynthetic process"/>
    <property type="evidence" value="ECO:0007669"/>
    <property type="project" value="UniProtKB-UniRule"/>
</dbReference>
<dbReference type="GO" id="GO:0006434">
    <property type="term" value="P:seryl-tRNA aminoacylation"/>
    <property type="evidence" value="ECO:0007669"/>
    <property type="project" value="UniProtKB-UniRule"/>
</dbReference>
<dbReference type="CDD" id="cd00770">
    <property type="entry name" value="SerRS_core"/>
    <property type="match status" value="1"/>
</dbReference>
<dbReference type="Gene3D" id="3.30.930.10">
    <property type="entry name" value="Bira Bifunctional Protein, Domain 2"/>
    <property type="match status" value="1"/>
</dbReference>
<dbReference type="Gene3D" id="1.10.287.40">
    <property type="entry name" value="Serine-tRNA synthetase, tRNA binding domain"/>
    <property type="match status" value="1"/>
</dbReference>
<dbReference type="HAMAP" id="MF_00176">
    <property type="entry name" value="Ser_tRNA_synth_type1"/>
    <property type="match status" value="1"/>
</dbReference>
<dbReference type="InterPro" id="IPR002314">
    <property type="entry name" value="aa-tRNA-synt_IIb"/>
</dbReference>
<dbReference type="InterPro" id="IPR006195">
    <property type="entry name" value="aa-tRNA-synth_II"/>
</dbReference>
<dbReference type="InterPro" id="IPR045864">
    <property type="entry name" value="aa-tRNA-synth_II/BPL/LPL"/>
</dbReference>
<dbReference type="InterPro" id="IPR002317">
    <property type="entry name" value="Ser-tRNA-ligase_type_1"/>
</dbReference>
<dbReference type="InterPro" id="IPR015866">
    <property type="entry name" value="Ser-tRNA-synth_1_N"/>
</dbReference>
<dbReference type="InterPro" id="IPR042103">
    <property type="entry name" value="SerRS_1_N_sf"/>
</dbReference>
<dbReference type="InterPro" id="IPR033729">
    <property type="entry name" value="SerRS_core"/>
</dbReference>
<dbReference type="InterPro" id="IPR010978">
    <property type="entry name" value="tRNA-bd_arm"/>
</dbReference>
<dbReference type="NCBIfam" id="TIGR00414">
    <property type="entry name" value="serS"/>
    <property type="match status" value="1"/>
</dbReference>
<dbReference type="PANTHER" id="PTHR43697:SF1">
    <property type="entry name" value="SERINE--TRNA LIGASE"/>
    <property type="match status" value="1"/>
</dbReference>
<dbReference type="PANTHER" id="PTHR43697">
    <property type="entry name" value="SERYL-TRNA SYNTHETASE"/>
    <property type="match status" value="1"/>
</dbReference>
<dbReference type="Pfam" id="PF02403">
    <property type="entry name" value="Seryl_tRNA_N"/>
    <property type="match status" value="1"/>
</dbReference>
<dbReference type="Pfam" id="PF00587">
    <property type="entry name" value="tRNA-synt_2b"/>
    <property type="match status" value="1"/>
</dbReference>
<dbReference type="PIRSF" id="PIRSF001529">
    <property type="entry name" value="Ser-tRNA-synth_IIa"/>
    <property type="match status" value="1"/>
</dbReference>
<dbReference type="PRINTS" id="PR00981">
    <property type="entry name" value="TRNASYNTHSER"/>
</dbReference>
<dbReference type="SUPFAM" id="SSF55681">
    <property type="entry name" value="Class II aaRS and biotin synthetases"/>
    <property type="match status" value="1"/>
</dbReference>
<dbReference type="SUPFAM" id="SSF46589">
    <property type="entry name" value="tRNA-binding arm"/>
    <property type="match status" value="1"/>
</dbReference>
<dbReference type="PROSITE" id="PS50862">
    <property type="entry name" value="AA_TRNA_LIGASE_II"/>
    <property type="match status" value="1"/>
</dbReference>
<reference key="1">
    <citation type="journal article" date="2007" name="PLoS Genet.">
        <title>A tale of two oxidation states: bacterial colonization of arsenic-rich environments.</title>
        <authorList>
            <person name="Muller D."/>
            <person name="Medigue C."/>
            <person name="Koechler S."/>
            <person name="Barbe V."/>
            <person name="Barakat M."/>
            <person name="Talla E."/>
            <person name="Bonnefoy V."/>
            <person name="Krin E."/>
            <person name="Arsene-Ploetze F."/>
            <person name="Carapito C."/>
            <person name="Chandler M."/>
            <person name="Cournoyer B."/>
            <person name="Cruveiller S."/>
            <person name="Dossat C."/>
            <person name="Duval S."/>
            <person name="Heymann M."/>
            <person name="Leize E."/>
            <person name="Lieutaud A."/>
            <person name="Lievremont D."/>
            <person name="Makita Y."/>
            <person name="Mangenot S."/>
            <person name="Nitschke W."/>
            <person name="Ortet P."/>
            <person name="Perdrial N."/>
            <person name="Schoepp B."/>
            <person name="Siguier P."/>
            <person name="Simeonova D.D."/>
            <person name="Rouy Z."/>
            <person name="Segurens B."/>
            <person name="Turlin E."/>
            <person name="Vallenet D."/>
            <person name="van Dorsselaer A."/>
            <person name="Weiss S."/>
            <person name="Weissenbach J."/>
            <person name="Lett M.-C."/>
            <person name="Danchin A."/>
            <person name="Bertin P.N."/>
        </authorList>
    </citation>
    <scope>NUCLEOTIDE SEQUENCE [LARGE SCALE GENOMIC DNA]</scope>
    <source>
        <strain>ULPAs1</strain>
    </source>
</reference>
<evidence type="ECO:0000255" key="1">
    <source>
        <dbReference type="HAMAP-Rule" id="MF_00176"/>
    </source>
</evidence>
<protein>
    <recommendedName>
        <fullName evidence="1">Serine--tRNA ligase</fullName>
        <ecNumber evidence="1">6.1.1.11</ecNumber>
    </recommendedName>
    <alternativeName>
        <fullName evidence="1">Seryl-tRNA synthetase</fullName>
        <shortName evidence="1">SerRS</shortName>
    </alternativeName>
    <alternativeName>
        <fullName evidence="1">Seryl-tRNA(Ser/Sec) synthetase</fullName>
    </alternativeName>
</protein>
<accession>A4G3W7</accession>
<comment type="function">
    <text evidence="1">Catalyzes the attachment of serine to tRNA(Ser). Is also able to aminoacylate tRNA(Sec) with serine, to form the misacylated tRNA L-seryl-tRNA(Sec), which will be further converted into selenocysteinyl-tRNA(Sec).</text>
</comment>
<comment type="catalytic activity">
    <reaction evidence="1">
        <text>tRNA(Ser) + L-serine + ATP = L-seryl-tRNA(Ser) + AMP + diphosphate + H(+)</text>
        <dbReference type="Rhea" id="RHEA:12292"/>
        <dbReference type="Rhea" id="RHEA-COMP:9669"/>
        <dbReference type="Rhea" id="RHEA-COMP:9703"/>
        <dbReference type="ChEBI" id="CHEBI:15378"/>
        <dbReference type="ChEBI" id="CHEBI:30616"/>
        <dbReference type="ChEBI" id="CHEBI:33019"/>
        <dbReference type="ChEBI" id="CHEBI:33384"/>
        <dbReference type="ChEBI" id="CHEBI:78442"/>
        <dbReference type="ChEBI" id="CHEBI:78533"/>
        <dbReference type="ChEBI" id="CHEBI:456215"/>
        <dbReference type="EC" id="6.1.1.11"/>
    </reaction>
</comment>
<comment type="catalytic activity">
    <reaction evidence="1">
        <text>tRNA(Sec) + L-serine + ATP = L-seryl-tRNA(Sec) + AMP + diphosphate + H(+)</text>
        <dbReference type="Rhea" id="RHEA:42580"/>
        <dbReference type="Rhea" id="RHEA-COMP:9742"/>
        <dbReference type="Rhea" id="RHEA-COMP:10128"/>
        <dbReference type="ChEBI" id="CHEBI:15378"/>
        <dbReference type="ChEBI" id="CHEBI:30616"/>
        <dbReference type="ChEBI" id="CHEBI:33019"/>
        <dbReference type="ChEBI" id="CHEBI:33384"/>
        <dbReference type="ChEBI" id="CHEBI:78442"/>
        <dbReference type="ChEBI" id="CHEBI:78533"/>
        <dbReference type="ChEBI" id="CHEBI:456215"/>
        <dbReference type="EC" id="6.1.1.11"/>
    </reaction>
</comment>
<comment type="pathway">
    <text evidence="1">Aminoacyl-tRNA biosynthesis; selenocysteinyl-tRNA(Sec) biosynthesis; L-seryl-tRNA(Sec) from L-serine and tRNA(Sec): step 1/1.</text>
</comment>
<comment type="subunit">
    <text evidence="1">Homodimer. The tRNA molecule binds across the dimer.</text>
</comment>
<comment type="subcellular location">
    <subcellularLocation>
        <location evidence="1">Cytoplasm</location>
    </subcellularLocation>
</comment>
<comment type="domain">
    <text evidence="1">Consists of two distinct domains, a catalytic core and a N-terminal extension that is involved in tRNA binding.</text>
</comment>
<comment type="similarity">
    <text evidence="1">Belongs to the class-II aminoacyl-tRNA synthetase family. Type-1 seryl-tRNA synthetase subfamily.</text>
</comment>